<keyword id="KW-0997">Cell inner membrane</keyword>
<keyword id="KW-1003">Cell membrane</keyword>
<keyword id="KW-0445">Lipid transport</keyword>
<keyword id="KW-0472">Membrane</keyword>
<keyword id="KW-0812">Transmembrane</keyword>
<keyword id="KW-1133">Transmembrane helix</keyword>
<keyword id="KW-0813">Transport</keyword>
<evidence type="ECO:0000255" key="1">
    <source>
        <dbReference type="HAMAP-Rule" id="MF_01585"/>
    </source>
</evidence>
<gene>
    <name evidence="1" type="primary">lplT</name>
    <name type="ordered locus">ECH74115_4102</name>
</gene>
<sequence length="397" mass="41639">MSESVHTNTSLWSKGMKAVIVAQFLSAFGDNALLFATLALLKAQFYPEWSQPILQMVFVGAYILFAPFVGQVADSFAKGRVMMFANGLKLLGAASICFGINPFLGYTLVGVGAAAYSPAKYGILGELTTGSKLVKANGLMEASTIAAILLGSVAGGVLADWHVLVALAACALAYGGAVVANIYIPKLAAARPGQSWNLINMTRSFLNACTSLWRNGETRFSLVGTSLFWGAGVTLRFLLVLWVPVALGITDNATPTYLNAMVAIGIVVGAGAAAKLVTLETVSRCMPAGILIGVVVLIFSLQHEQLPAYALLMLIGVLGGFFVVPLNALLQERGKKSVGAGNAIAVQNLGENSAMLLMLGIYSLAVMVGIPVVPIGIGFGALFALAITALWIWQRRH</sequence>
<feature type="chain" id="PRO_1000201266" description="Lysophospholipid transporter LplT">
    <location>
        <begin position="1"/>
        <end position="397"/>
    </location>
</feature>
<feature type="topological domain" description="Periplasmic" evidence="1">
    <location>
        <begin position="1"/>
        <end position="17"/>
    </location>
</feature>
<feature type="transmembrane region" description="Helical" evidence="1">
    <location>
        <begin position="18"/>
        <end position="38"/>
    </location>
</feature>
<feature type="topological domain" description="Cytoplasmic" evidence="1">
    <location>
        <begin position="39"/>
        <end position="52"/>
    </location>
</feature>
<feature type="transmembrane region" description="Helical" evidence="1">
    <location>
        <begin position="53"/>
        <end position="73"/>
    </location>
</feature>
<feature type="topological domain" description="Periplasmic" evidence="1">
    <location>
        <begin position="74"/>
        <end position="90"/>
    </location>
</feature>
<feature type="transmembrane region" description="Helical" evidence="1">
    <location>
        <begin position="91"/>
        <end position="111"/>
    </location>
</feature>
<feature type="topological domain" description="Cytoplasmic" evidence="1">
    <location>
        <begin position="112"/>
        <end position="144"/>
    </location>
</feature>
<feature type="transmembrane region" description="Helical" evidence="1">
    <location>
        <begin position="145"/>
        <end position="165"/>
    </location>
</feature>
<feature type="topological domain" description="Periplasmic" evidence="1">
    <location>
        <position position="166"/>
    </location>
</feature>
<feature type="transmembrane region" description="Helical" evidence="1">
    <location>
        <begin position="167"/>
        <end position="187"/>
    </location>
</feature>
<feature type="topological domain" description="Cytoplasmic" evidence="1">
    <location>
        <begin position="188"/>
        <end position="226"/>
    </location>
</feature>
<feature type="transmembrane region" description="Helical" evidence="1">
    <location>
        <begin position="227"/>
        <end position="247"/>
    </location>
</feature>
<feature type="topological domain" description="Periplasmic" evidence="1">
    <location>
        <begin position="248"/>
        <end position="256"/>
    </location>
</feature>
<feature type="transmembrane region" description="Helical" evidence="1">
    <location>
        <begin position="257"/>
        <end position="277"/>
    </location>
</feature>
<feature type="topological domain" description="Cytoplasmic" evidence="1">
    <location>
        <begin position="278"/>
        <end position="280"/>
    </location>
</feature>
<feature type="transmembrane region" description="Helical" evidence="1">
    <location>
        <begin position="281"/>
        <end position="301"/>
    </location>
</feature>
<feature type="topological domain" description="Periplasmic" evidence="1">
    <location>
        <begin position="302"/>
        <end position="304"/>
    </location>
</feature>
<feature type="transmembrane region" description="Helical" evidence="1">
    <location>
        <begin position="305"/>
        <end position="325"/>
    </location>
</feature>
<feature type="topological domain" description="Cytoplasmic" evidence="1">
    <location>
        <begin position="326"/>
        <end position="343"/>
    </location>
</feature>
<feature type="transmembrane region" description="Helical" evidence="1">
    <location>
        <begin position="344"/>
        <end position="364"/>
    </location>
</feature>
<feature type="topological domain" description="Periplasmic" evidence="1">
    <location>
        <begin position="365"/>
        <end position="366"/>
    </location>
</feature>
<feature type="transmembrane region" description="Helical" evidence="1">
    <location>
        <begin position="367"/>
        <end position="387"/>
    </location>
</feature>
<feature type="topological domain" description="Cytoplasmic" evidence="1">
    <location>
        <begin position="388"/>
        <end position="397"/>
    </location>
</feature>
<comment type="function">
    <text evidence="1">Catalyzes the facilitated diffusion of 2-acyl-glycero-3-phosphoethanolamine (2-acyl-GPE) into the cell.</text>
</comment>
<comment type="subcellular location">
    <subcellularLocation>
        <location evidence="1">Cell inner membrane</location>
        <topology evidence="1">Multi-pass membrane protein</topology>
    </subcellularLocation>
</comment>
<comment type="similarity">
    <text evidence="1">Belongs to the major facilitator superfamily. LplT (TC 2.A.1.42) family.</text>
</comment>
<proteinExistence type="inferred from homology"/>
<reference key="1">
    <citation type="journal article" date="2011" name="Proc. Natl. Acad. Sci. U.S.A.">
        <title>Genomic anatomy of Escherichia coli O157:H7 outbreaks.</title>
        <authorList>
            <person name="Eppinger M."/>
            <person name="Mammel M.K."/>
            <person name="Leclerc J.E."/>
            <person name="Ravel J."/>
            <person name="Cebula T.A."/>
        </authorList>
    </citation>
    <scope>NUCLEOTIDE SEQUENCE [LARGE SCALE GENOMIC DNA]</scope>
    <source>
        <strain>EC4115 / EHEC</strain>
    </source>
</reference>
<dbReference type="EMBL" id="CP001164">
    <property type="protein sequence ID" value="ACI35832.1"/>
    <property type="molecule type" value="Genomic_DNA"/>
</dbReference>
<dbReference type="RefSeq" id="WP_000004620.1">
    <property type="nucleotide sequence ID" value="NC_011353.1"/>
</dbReference>
<dbReference type="SMR" id="B5Z4F3"/>
<dbReference type="KEGG" id="ecf:ECH74115_4102"/>
<dbReference type="HOGENOM" id="CLU_047399_0_0_6"/>
<dbReference type="GO" id="GO:0005886">
    <property type="term" value="C:plasma membrane"/>
    <property type="evidence" value="ECO:0007669"/>
    <property type="project" value="UniProtKB-SubCell"/>
</dbReference>
<dbReference type="GO" id="GO:0051978">
    <property type="term" value="F:lysophospholipid:sodium symporter activity"/>
    <property type="evidence" value="ECO:0007669"/>
    <property type="project" value="InterPro"/>
</dbReference>
<dbReference type="CDD" id="cd06173">
    <property type="entry name" value="MFS_MefA_like"/>
    <property type="match status" value="1"/>
</dbReference>
<dbReference type="FunFam" id="1.20.1250.20:FF:000091">
    <property type="entry name" value="Lysophospholipid transporter LplT"/>
    <property type="match status" value="1"/>
</dbReference>
<dbReference type="Gene3D" id="1.20.1250.20">
    <property type="entry name" value="MFS general substrate transporter like domains"/>
    <property type="match status" value="1"/>
</dbReference>
<dbReference type="HAMAP" id="MF_01585">
    <property type="entry name" value="MFS_LplT"/>
    <property type="match status" value="1"/>
</dbReference>
<dbReference type="InterPro" id="IPR023727">
    <property type="entry name" value="LysoPLipid__transptr_LplT"/>
</dbReference>
<dbReference type="InterPro" id="IPR011701">
    <property type="entry name" value="MFS"/>
</dbReference>
<dbReference type="InterPro" id="IPR036259">
    <property type="entry name" value="MFS_trans_sf"/>
</dbReference>
<dbReference type="NCBIfam" id="NF008397">
    <property type="entry name" value="PRK11195.1"/>
    <property type="match status" value="1"/>
</dbReference>
<dbReference type="PANTHER" id="PTHR43266">
    <property type="entry name" value="MACROLIDE-EFFLUX PROTEIN"/>
    <property type="match status" value="1"/>
</dbReference>
<dbReference type="PANTHER" id="PTHR43266:SF2">
    <property type="entry name" value="MAJOR FACILITATOR SUPERFAMILY (MFS) PROFILE DOMAIN-CONTAINING PROTEIN"/>
    <property type="match status" value="1"/>
</dbReference>
<dbReference type="Pfam" id="PF07690">
    <property type="entry name" value="MFS_1"/>
    <property type="match status" value="1"/>
</dbReference>
<dbReference type="SUPFAM" id="SSF103473">
    <property type="entry name" value="MFS general substrate transporter"/>
    <property type="match status" value="1"/>
</dbReference>
<accession>B5Z4F3</accession>
<protein>
    <recommendedName>
        <fullName evidence="1">Lysophospholipid transporter LplT</fullName>
    </recommendedName>
</protein>
<organism>
    <name type="scientific">Escherichia coli O157:H7 (strain EC4115 / EHEC)</name>
    <dbReference type="NCBI Taxonomy" id="444450"/>
    <lineage>
        <taxon>Bacteria</taxon>
        <taxon>Pseudomonadati</taxon>
        <taxon>Pseudomonadota</taxon>
        <taxon>Gammaproteobacteria</taxon>
        <taxon>Enterobacterales</taxon>
        <taxon>Enterobacteriaceae</taxon>
        <taxon>Escherichia</taxon>
    </lineage>
</organism>
<name>LPLT_ECO5E</name>